<protein>
    <recommendedName>
        <fullName>Putative mediator of RNA polymerase II transcription subunit 9</fullName>
    </recommendedName>
    <alternativeName>
        <fullName>Putative mediator complex subunit 9</fullName>
    </alternativeName>
</protein>
<accession>Q54KY8</accession>
<gene>
    <name type="primary">med9</name>
    <name type="ORF">DDB_G0287019</name>
</gene>
<proteinExistence type="inferred from homology"/>
<name>MED9_DICDI</name>
<dbReference type="EMBL" id="AAFI02000095">
    <property type="protein sequence ID" value="EAL63936.1"/>
    <property type="molecule type" value="Genomic_DNA"/>
</dbReference>
<dbReference type="RefSeq" id="XP_637444.1">
    <property type="nucleotide sequence ID" value="XM_632352.1"/>
</dbReference>
<dbReference type="SMR" id="Q54KY8"/>
<dbReference type="FunCoup" id="Q54KY8">
    <property type="interactions" value="21"/>
</dbReference>
<dbReference type="STRING" id="44689.Q54KY8"/>
<dbReference type="PaxDb" id="44689-DDB0266868"/>
<dbReference type="EnsemblProtists" id="EAL63936">
    <property type="protein sequence ID" value="EAL63936"/>
    <property type="gene ID" value="DDB_G0287019"/>
</dbReference>
<dbReference type="GeneID" id="8625912"/>
<dbReference type="KEGG" id="ddi:DDB_G0287019"/>
<dbReference type="dictyBase" id="DDB_G0287019">
    <property type="gene designation" value="med9"/>
</dbReference>
<dbReference type="VEuPathDB" id="AmoebaDB:DDB_G0287019"/>
<dbReference type="eggNOG" id="ENOG502RICM">
    <property type="taxonomic scope" value="Eukaryota"/>
</dbReference>
<dbReference type="HOGENOM" id="CLU_1386430_0_0_1"/>
<dbReference type="InParanoid" id="Q54KY8"/>
<dbReference type="PRO" id="PR:Q54KY8"/>
<dbReference type="Proteomes" id="UP000002195">
    <property type="component" value="Chromosome 4"/>
</dbReference>
<dbReference type="GO" id="GO:0070847">
    <property type="term" value="C:core mediator complex"/>
    <property type="evidence" value="ECO:0000250"/>
    <property type="project" value="dictyBase"/>
</dbReference>
<dbReference type="GO" id="GO:0005198">
    <property type="term" value="F:structural molecule activity"/>
    <property type="evidence" value="ECO:0000250"/>
    <property type="project" value="dictyBase"/>
</dbReference>
<dbReference type="GO" id="GO:0006366">
    <property type="term" value="P:transcription by RNA polymerase II"/>
    <property type="evidence" value="ECO:0000250"/>
    <property type="project" value="dictyBase"/>
</dbReference>
<organism>
    <name type="scientific">Dictyostelium discoideum</name>
    <name type="common">Social amoeba</name>
    <dbReference type="NCBI Taxonomy" id="44689"/>
    <lineage>
        <taxon>Eukaryota</taxon>
        <taxon>Amoebozoa</taxon>
        <taxon>Evosea</taxon>
        <taxon>Eumycetozoa</taxon>
        <taxon>Dictyostelia</taxon>
        <taxon>Dictyosteliales</taxon>
        <taxon>Dictyosteliaceae</taxon>
        <taxon>Dictyostelium</taxon>
    </lineage>
</organism>
<sequence length="197" mass="22235">MATPTNNYNTIVGSPMPTATTAATTTTVTPTQKELNIEDLQLFPSILDIISRIKDDEIDLIRAINLANETRTKTIETLNKLPGINRSLENQEELLKTYKQTLKKKVELLEKLKKLEIFEKYNKIKSTSSQSPQIQSKLELQTELSQTEPSQTEPSQTEPSQTEPSQTESSQIESSQIESSQTETEKSKETTEDIMKE</sequence>
<keyword id="KW-0010">Activator</keyword>
<keyword id="KW-0175">Coiled coil</keyword>
<keyword id="KW-0539">Nucleus</keyword>
<keyword id="KW-1185">Reference proteome</keyword>
<keyword id="KW-0804">Transcription</keyword>
<keyword id="KW-0805">Transcription regulation</keyword>
<evidence type="ECO:0000250" key="1"/>
<evidence type="ECO:0000255" key="2"/>
<evidence type="ECO:0000256" key="3">
    <source>
        <dbReference type="SAM" id="MobiDB-lite"/>
    </source>
</evidence>
<evidence type="ECO:0000305" key="4"/>
<reference key="1">
    <citation type="journal article" date="2005" name="Nature">
        <title>The genome of the social amoeba Dictyostelium discoideum.</title>
        <authorList>
            <person name="Eichinger L."/>
            <person name="Pachebat J.A."/>
            <person name="Gloeckner G."/>
            <person name="Rajandream M.A."/>
            <person name="Sucgang R."/>
            <person name="Berriman M."/>
            <person name="Song J."/>
            <person name="Olsen R."/>
            <person name="Szafranski K."/>
            <person name="Xu Q."/>
            <person name="Tunggal B."/>
            <person name="Kummerfeld S."/>
            <person name="Madera M."/>
            <person name="Konfortov B.A."/>
            <person name="Rivero F."/>
            <person name="Bankier A.T."/>
            <person name="Lehmann R."/>
            <person name="Hamlin N."/>
            <person name="Davies R."/>
            <person name="Gaudet P."/>
            <person name="Fey P."/>
            <person name="Pilcher K."/>
            <person name="Chen G."/>
            <person name="Saunders D."/>
            <person name="Sodergren E.J."/>
            <person name="Davis P."/>
            <person name="Kerhornou A."/>
            <person name="Nie X."/>
            <person name="Hall N."/>
            <person name="Anjard C."/>
            <person name="Hemphill L."/>
            <person name="Bason N."/>
            <person name="Farbrother P."/>
            <person name="Desany B."/>
            <person name="Just E."/>
            <person name="Morio T."/>
            <person name="Rost R."/>
            <person name="Churcher C.M."/>
            <person name="Cooper J."/>
            <person name="Haydock S."/>
            <person name="van Driessche N."/>
            <person name="Cronin A."/>
            <person name="Goodhead I."/>
            <person name="Muzny D.M."/>
            <person name="Mourier T."/>
            <person name="Pain A."/>
            <person name="Lu M."/>
            <person name="Harper D."/>
            <person name="Lindsay R."/>
            <person name="Hauser H."/>
            <person name="James K.D."/>
            <person name="Quiles M."/>
            <person name="Madan Babu M."/>
            <person name="Saito T."/>
            <person name="Buchrieser C."/>
            <person name="Wardroper A."/>
            <person name="Felder M."/>
            <person name="Thangavelu M."/>
            <person name="Johnson D."/>
            <person name="Knights A."/>
            <person name="Loulseged H."/>
            <person name="Mungall K.L."/>
            <person name="Oliver K."/>
            <person name="Price C."/>
            <person name="Quail M.A."/>
            <person name="Urushihara H."/>
            <person name="Hernandez J."/>
            <person name="Rabbinowitsch E."/>
            <person name="Steffen D."/>
            <person name="Sanders M."/>
            <person name="Ma J."/>
            <person name="Kohara Y."/>
            <person name="Sharp S."/>
            <person name="Simmonds M.N."/>
            <person name="Spiegler S."/>
            <person name="Tivey A."/>
            <person name="Sugano S."/>
            <person name="White B."/>
            <person name="Walker D."/>
            <person name="Woodward J.R."/>
            <person name="Winckler T."/>
            <person name="Tanaka Y."/>
            <person name="Shaulsky G."/>
            <person name="Schleicher M."/>
            <person name="Weinstock G.M."/>
            <person name="Rosenthal A."/>
            <person name="Cox E.C."/>
            <person name="Chisholm R.L."/>
            <person name="Gibbs R.A."/>
            <person name="Loomis W.F."/>
            <person name="Platzer M."/>
            <person name="Kay R.R."/>
            <person name="Williams J.G."/>
            <person name="Dear P.H."/>
            <person name="Noegel A.A."/>
            <person name="Barrell B.G."/>
            <person name="Kuspa A."/>
        </authorList>
    </citation>
    <scope>NUCLEOTIDE SEQUENCE [LARGE SCALE GENOMIC DNA]</scope>
    <source>
        <strain>AX4</strain>
    </source>
</reference>
<reference key="2">
    <citation type="journal article" date="2008" name="Nucleic Acids Res.">
        <title>Comparative genomics supports a deep evolutionary origin for the large, four-module transcriptional mediator complex.</title>
        <authorList>
            <person name="Bourbon H.-M."/>
        </authorList>
    </citation>
    <scope>NOMENCLATURE</scope>
</reference>
<feature type="chain" id="PRO_0000388649" description="Putative mediator of RNA polymerase II transcription subunit 9">
    <location>
        <begin position="1"/>
        <end position="197"/>
    </location>
</feature>
<feature type="region of interest" description="Disordered" evidence="3">
    <location>
        <begin position="126"/>
        <end position="197"/>
    </location>
</feature>
<feature type="coiled-coil region" evidence="2">
    <location>
        <begin position="83"/>
        <end position="117"/>
    </location>
</feature>
<feature type="compositionally biased region" description="Polar residues" evidence="3">
    <location>
        <begin position="126"/>
        <end position="144"/>
    </location>
</feature>
<feature type="compositionally biased region" description="Low complexity" evidence="3">
    <location>
        <begin position="145"/>
        <end position="182"/>
    </location>
</feature>
<feature type="compositionally biased region" description="Basic and acidic residues" evidence="3">
    <location>
        <begin position="183"/>
        <end position="197"/>
    </location>
</feature>
<comment type="function">
    <text evidence="1">Component of the Mediator complex, a coactivator involved in the regulated transcription of nearly all RNA polymerase II-dependent genes. Mediator functions as a bridge to convey information from gene-specific regulatory proteins to the basal RNA polymerase II transcription machinery. Mediator is recruited to promoters by direct interactions with regulatory proteins and serves as a scaffold for the assembly of a functional preinitiation complex with RNA polymerase II and the general transcription factors (By similarity).</text>
</comment>
<comment type="subunit">
    <text evidence="1">Component of the Mediator complex.</text>
</comment>
<comment type="subcellular location">
    <subcellularLocation>
        <location evidence="1">Nucleus</location>
    </subcellularLocation>
</comment>
<comment type="similarity">
    <text evidence="4">Belongs to the Mediator complex subunit 9 family.</text>
</comment>